<feature type="chain" id="PRO_0000203499" description="Transposon Ty1-MR1 Gag polyprotein">
    <location>
        <begin position="1"/>
        <end position="440"/>
    </location>
</feature>
<feature type="chain" id="PRO_0000279131" description="Capsid protein" evidence="1">
    <location>
        <begin position="1"/>
        <end position="401"/>
    </location>
</feature>
<feature type="peptide" id="PRO_0000279132" description="Gag-p4" evidence="1">
    <location>
        <begin position="402"/>
        <end position="440"/>
    </location>
</feature>
<feature type="region of interest" description="Disordered" evidence="2">
    <location>
        <begin position="1"/>
        <end position="88"/>
    </location>
</feature>
<feature type="region of interest" description="Disordered" evidence="2">
    <location>
        <begin position="137"/>
        <end position="174"/>
    </location>
</feature>
<feature type="region of interest" description="RNA-binding" evidence="1">
    <location>
        <begin position="299"/>
        <end position="401"/>
    </location>
</feature>
<feature type="region of interest" description="Disordered" evidence="2">
    <location>
        <begin position="350"/>
        <end position="424"/>
    </location>
</feature>
<feature type="compositionally biased region" description="Polar residues" evidence="2">
    <location>
        <begin position="1"/>
        <end position="31"/>
    </location>
</feature>
<feature type="compositionally biased region" description="Polar residues" evidence="2">
    <location>
        <begin position="46"/>
        <end position="60"/>
    </location>
</feature>
<feature type="compositionally biased region" description="Polar residues" evidence="2">
    <location>
        <begin position="137"/>
        <end position="168"/>
    </location>
</feature>
<feature type="compositionally biased region" description="Basic and acidic residues" evidence="2">
    <location>
        <begin position="363"/>
        <end position="372"/>
    </location>
</feature>
<feature type="compositionally biased region" description="Polar residues" evidence="2">
    <location>
        <begin position="373"/>
        <end position="411"/>
    </location>
</feature>
<feature type="site" description="Cleavage; by Ty1 protease" evidence="1">
    <location>
        <begin position="401"/>
        <end position="402"/>
    </location>
</feature>
<accession>Q04215</accession>
<accession>D6VZM1</accession>
<dbReference type="EMBL" id="Z48502">
    <property type="protein sequence ID" value="CAA88412.1"/>
    <property type="molecule type" value="Genomic_DNA"/>
</dbReference>
<dbReference type="EMBL" id="BK006946">
    <property type="protein sequence ID" value="DAA09945.1"/>
    <property type="molecule type" value="Genomic_DNA"/>
</dbReference>
<dbReference type="PIR" id="S52895">
    <property type="entry name" value="S52895"/>
</dbReference>
<dbReference type="RefSeq" id="NP_013760.1">
    <molecule id="Q04215-1"/>
    <property type="nucleotide sequence ID" value="NM_001182543.1"/>
</dbReference>
<dbReference type="SMR" id="Q04215"/>
<dbReference type="BioGRID" id="35219">
    <property type="interactions" value="9"/>
</dbReference>
<dbReference type="FunCoup" id="Q04215">
    <property type="interactions" value="60"/>
</dbReference>
<dbReference type="IntAct" id="Q04215">
    <property type="interactions" value="2"/>
</dbReference>
<dbReference type="GlyGen" id="Q04215">
    <property type="glycosylation" value="1 site"/>
</dbReference>
<dbReference type="PaxDb" id="4932-YMR046C"/>
<dbReference type="PeptideAtlas" id="Q04215"/>
<dbReference type="GeneID" id="855063"/>
<dbReference type="KEGG" id="sce:YMR046C"/>
<dbReference type="AGR" id="SGD:S000004649"/>
<dbReference type="SGD" id="S000004649">
    <property type="gene designation" value="YMR046C"/>
</dbReference>
<dbReference type="VEuPathDB" id="FungiDB:YMR046C"/>
<dbReference type="eggNOG" id="KOG0017">
    <property type="taxonomic scope" value="Eukaryota"/>
</dbReference>
<dbReference type="HOGENOM" id="CLU_045291_1_0_1"/>
<dbReference type="InParanoid" id="Q04215"/>
<dbReference type="OrthoDB" id="5423336at2759"/>
<dbReference type="Proteomes" id="UP000002311">
    <property type="component" value="Chromosome XIII"/>
</dbReference>
<dbReference type="RNAct" id="Q04215">
    <property type="molecule type" value="protein"/>
</dbReference>
<dbReference type="GO" id="GO:0005737">
    <property type="term" value="C:cytoplasm"/>
    <property type="evidence" value="ECO:0007669"/>
    <property type="project" value="UniProtKB-SubCell"/>
</dbReference>
<dbReference type="GO" id="GO:0003723">
    <property type="term" value="F:RNA binding"/>
    <property type="evidence" value="ECO:0007669"/>
    <property type="project" value="UniProtKB-KW"/>
</dbReference>
<dbReference type="GO" id="GO:0075523">
    <property type="term" value="P:viral translational frameshifting"/>
    <property type="evidence" value="ECO:0007669"/>
    <property type="project" value="UniProtKB-KW"/>
</dbReference>
<dbReference type="InterPro" id="IPR015820">
    <property type="entry name" value="TYA"/>
</dbReference>
<dbReference type="Pfam" id="PF01021">
    <property type="entry name" value="TYA"/>
    <property type="match status" value="1"/>
</dbReference>
<name>YM13A_YEAST</name>
<comment type="function">
    <text evidence="1">Capsid protein (CA) is the structural component of the virus-like particle (VLP), forming the shell that encapsulates the retrotransposons dimeric RNA genome. The particles are assembled from trimer-clustered units and there are holes in the capsid shells that allow for the diffusion of macromolecules. CA also has nucleocapsid-like chaperone activity, promoting primer tRNA(i)-Met annealing to the multipartite primer-binding site (PBS), dimerization of Ty1 RNA and initiation of reverse transcription (By similarity).</text>
</comment>
<comment type="subunit">
    <text evidence="1">Homotrimer.</text>
</comment>
<comment type="subcellular location">
    <subcellularLocation>
        <location evidence="1">Cytoplasm</location>
    </subcellularLocation>
</comment>
<comment type="alternative products">
    <event type="ribosomal frameshifting"/>
    <isoform>
        <id>Q04215-1</id>
        <name>Transposon Ty1-MR1 Gag polyprotein</name>
        <sequence type="displayed"/>
    </isoform>
    <isoform>
        <id>Q04214-1</id>
        <name>Transposon Ty1-MR1 Gag-Pol polyprotein</name>
        <sequence type="external"/>
    </isoform>
    <text evidence="1">The Gag-Pol polyprotein is generated by a +1 ribosomal frameshift. The ratio of Gag:Gag-Pol varies between 20:1 and 5:1 (By similarity).</text>
</comment>
<comment type="induction">
    <text evidence="3">Ty1-MR1 is a weakly expressed element. Induced under amino acid starvation conditions by GCN4.</text>
</comment>
<comment type="domain">
    <text evidence="1">The C-terminal RNA-binding region of CA is sufficient for all its nucleocapsid-like chaperone activities.</text>
</comment>
<comment type="miscellaneous">
    <text>Retrotransposons are mobile genetic entities that are able to replicate via an RNA intermediate and a reverse transcription step. In contrast to retroviruses, retrotransposons are non-infectious, lack an envelope and remain intracellular. Ty1 retrotransposons belong to the copia elements (pseudoviridae).</text>
</comment>
<comment type="miscellaneous">
    <molecule>Isoform Transposon Ty1-MR1 Gag polyprotein</molecule>
    <text>Produced by conventional translation.</text>
</comment>
<protein>
    <recommendedName>
        <fullName>Transposon Ty1-MR1 Gag polyprotein</fullName>
    </recommendedName>
    <alternativeName>
        <fullName>Gag-p49</fullName>
    </alternativeName>
    <alternativeName>
        <fullName>Transposon Ty1 protein A</fullName>
        <shortName>TY1A</shortName>
        <shortName>TYA</shortName>
    </alternativeName>
    <alternativeName>
        <fullName>p58</fullName>
    </alternativeName>
    <component>
        <recommendedName>
            <fullName>Capsid protein</fullName>
            <shortName>CA</shortName>
        </recommendedName>
        <alternativeName>
            <fullName>Gag-p45</fullName>
        </alternativeName>
        <alternativeName>
            <fullName>p54</fullName>
        </alternativeName>
    </component>
    <component>
        <recommendedName>
            <fullName>Gag-p4</fullName>
        </recommendedName>
    </component>
</protein>
<organism>
    <name type="scientific">Saccharomyces cerevisiae (strain ATCC 204508 / S288c)</name>
    <name type="common">Baker's yeast</name>
    <dbReference type="NCBI Taxonomy" id="559292"/>
    <lineage>
        <taxon>Eukaryota</taxon>
        <taxon>Fungi</taxon>
        <taxon>Dikarya</taxon>
        <taxon>Ascomycota</taxon>
        <taxon>Saccharomycotina</taxon>
        <taxon>Saccharomycetes</taxon>
        <taxon>Saccharomycetales</taxon>
        <taxon>Saccharomycetaceae</taxon>
        <taxon>Saccharomyces</taxon>
    </lineage>
</organism>
<reference key="1">
    <citation type="journal article" date="1997" name="Nature">
        <title>The nucleotide sequence of Saccharomyces cerevisiae chromosome XIII.</title>
        <authorList>
            <person name="Bowman S."/>
            <person name="Churcher C.M."/>
            <person name="Badcock K."/>
            <person name="Brown D."/>
            <person name="Chillingworth T."/>
            <person name="Connor R."/>
            <person name="Dedman K."/>
            <person name="Devlin K."/>
            <person name="Gentles S."/>
            <person name="Hamlin N."/>
            <person name="Hunt S."/>
            <person name="Jagels K."/>
            <person name="Lye G."/>
            <person name="Moule S."/>
            <person name="Odell C."/>
            <person name="Pearson D."/>
            <person name="Rajandream M.A."/>
            <person name="Rice P."/>
            <person name="Skelton J."/>
            <person name="Walsh S.V."/>
            <person name="Whitehead S."/>
            <person name="Barrell B.G."/>
        </authorList>
    </citation>
    <scope>NUCLEOTIDE SEQUENCE [LARGE SCALE GENOMIC DNA]</scope>
    <source>
        <strain>ATCC 204508 / S288c</strain>
    </source>
</reference>
<reference key="2">
    <citation type="journal article" date="2014" name="G3 (Bethesda)">
        <title>The reference genome sequence of Saccharomyces cerevisiae: Then and now.</title>
        <authorList>
            <person name="Engel S.R."/>
            <person name="Dietrich F.S."/>
            <person name="Fisk D.G."/>
            <person name="Binkley G."/>
            <person name="Balakrishnan R."/>
            <person name="Costanzo M.C."/>
            <person name="Dwight S.S."/>
            <person name="Hitz B.C."/>
            <person name="Karra K."/>
            <person name="Nash R.S."/>
            <person name="Weng S."/>
            <person name="Wong E.D."/>
            <person name="Lloyd P."/>
            <person name="Skrzypek M.S."/>
            <person name="Miyasato S.R."/>
            <person name="Simison M."/>
            <person name="Cherry J.M."/>
        </authorList>
    </citation>
    <scope>GENOME REANNOTATION</scope>
    <source>
        <strain>ATCC 204508 / S288c</strain>
    </source>
</reference>
<reference key="3">
    <citation type="journal article" date="1998" name="Genome Res.">
        <title>Transposable elements and genome organization: a comprehensive survey of retrotransposons revealed by the complete Saccharomyces cerevisiae genome sequence.</title>
        <authorList>
            <person name="Kim J.M."/>
            <person name="Vanguri S."/>
            <person name="Boeke J.D."/>
            <person name="Gabriel A."/>
            <person name="Voytas D.F."/>
        </authorList>
    </citation>
    <scope>NOMENCLATURE</scope>
</reference>
<reference key="4">
    <citation type="journal article" date="2002" name="Mol. Cell. Biol.">
        <title>Differential effects of chromatin and Gcn4 on the 50-fold range of expression among individual yeast Ty1 retrotransposons.</title>
        <authorList>
            <person name="Morillon A."/>
            <person name="Benard L."/>
            <person name="Springer M."/>
            <person name="Lesage P."/>
        </authorList>
    </citation>
    <scope>INDUCTION</scope>
</reference>
<reference key="5">
    <citation type="journal article" date="2005" name="Cytogenet. Genome Res.">
        <title>Happy together: the life and times of Ty retrotransposons and their hosts.</title>
        <authorList>
            <person name="Lesage P."/>
            <person name="Todeschini A.L."/>
        </authorList>
    </citation>
    <scope>REVIEW</scope>
</reference>
<reference key="6">
    <citation type="journal article" date="2007" name="J. Proteome Res.">
        <title>Large-scale phosphorylation analysis of alpha-factor-arrested Saccharomyces cerevisiae.</title>
        <authorList>
            <person name="Li X."/>
            <person name="Gerber S.A."/>
            <person name="Rudner A.D."/>
            <person name="Beausoleil S.A."/>
            <person name="Haas W."/>
            <person name="Villen J."/>
            <person name="Elias J.E."/>
            <person name="Gygi S.P."/>
        </authorList>
    </citation>
    <scope>IDENTIFICATION BY MASS SPECTROMETRY [LARGE SCALE ANALYSIS]</scope>
    <source>
        <strain>ADR376</strain>
    </source>
</reference>
<reference key="7">
    <citation type="journal article" date="2008" name="Mol. Cell. Proteomics">
        <title>A multidimensional chromatography technology for in-depth phosphoproteome analysis.</title>
        <authorList>
            <person name="Albuquerque C.P."/>
            <person name="Smolka M.B."/>
            <person name="Payne S.H."/>
            <person name="Bafna V."/>
            <person name="Eng J."/>
            <person name="Zhou H."/>
        </authorList>
    </citation>
    <scope>IDENTIFICATION BY MASS SPECTROMETRY [LARGE SCALE ANALYSIS]</scope>
</reference>
<reference key="8">
    <citation type="journal article" date="2009" name="Science">
        <title>Global analysis of Cdk1 substrate phosphorylation sites provides insights into evolution.</title>
        <authorList>
            <person name="Holt L.J."/>
            <person name="Tuch B.B."/>
            <person name="Villen J."/>
            <person name="Johnson A.D."/>
            <person name="Gygi S.P."/>
            <person name="Morgan D.O."/>
        </authorList>
    </citation>
    <scope>IDENTIFICATION BY MASS SPECTROMETRY [LARGE SCALE ANALYSIS]</scope>
</reference>
<proteinExistence type="evidence at protein level"/>
<keyword id="KW-0963">Cytoplasm</keyword>
<keyword id="KW-1185">Reference proteome</keyword>
<keyword id="KW-0688">Ribosomal frameshifting</keyword>
<keyword id="KW-0694">RNA-binding</keyword>
<keyword id="KW-0814">Transposable element</keyword>
<evidence type="ECO:0000250" key="1"/>
<evidence type="ECO:0000256" key="2">
    <source>
        <dbReference type="SAM" id="MobiDB-lite"/>
    </source>
</evidence>
<evidence type="ECO:0000269" key="3">
    <source>
    </source>
</evidence>
<sequence length="440" mass="49274">MESQQLSQHSPISHGSACASVTSKEVQTTQDPLDISASKTEECEKVSTQANSQQPTTPLSSAVPENHHHASPQAAQVPLPQNGPYPQQRMMNTQQANISGWPVYGHPSLMPYPPYQMSPMYAPPGAQSQFTQYPQYVGTHLNTPSPESGNSFPDSSSAKSNMTSTNQHVRPPPILTSPNDFLNWVKIYIKFLQNSNLGDIIPTATRKAVRQMTDDELTFLCHTFQLFAPSQFLPPWVKDILSVDYTDIMKILSKSINKMQSDTQEVNDITTLATLHYNGSTPADAFEAEVTNILDRLNNNGIPINNKVACQFIMRGLSGEYKFLRYARHRCIHMTVADLFSDIHSMYEEQQESKRNKSTHRRSPSDEKKDSRTYTNTTKPKSITRNSQKPNNSQSRTARAHNVSTFNNSPGPDNDLIRGSTTEPIQLKNTHDLHLRPGTY</sequence>
<gene>
    <name type="primary">TY1A-MR1</name>
    <name type="synonym">YMRCTy1-3 GAG</name>
    <name type="ordered locus">YMR046C</name>
    <name type="ORF">YM9532.11C</name>
</gene>